<accession>P0DPT9</accession>
<evidence type="ECO:0000250" key="1"/>
<evidence type="ECO:0000250" key="2">
    <source>
        <dbReference type="UniProtKB" id="C1JAR9"/>
    </source>
</evidence>
<evidence type="ECO:0000250" key="3">
    <source>
        <dbReference type="UniProtKB" id="O15496"/>
    </source>
</evidence>
<evidence type="ECO:0000250" key="4">
    <source>
        <dbReference type="UniProtKB" id="P14555"/>
    </source>
</evidence>
<evidence type="ECO:0000255" key="5"/>
<evidence type="ECO:0000255" key="6">
    <source>
        <dbReference type="PROSITE-ProRule" id="PRU10035"/>
    </source>
</evidence>
<evidence type="ECO:0000255" key="7">
    <source>
        <dbReference type="PROSITE-ProRule" id="PRU10036"/>
    </source>
</evidence>
<evidence type="ECO:0000269" key="8">
    <source>
    </source>
</evidence>
<evidence type="ECO:0000303" key="9">
    <source>
    </source>
</evidence>
<evidence type="ECO:0000305" key="10"/>
<evidence type="ECO:0000305" key="11">
    <source>
    </source>
</evidence>
<feature type="signal peptide" evidence="5">
    <location>
        <begin position="1"/>
        <end position="22"/>
    </location>
</feature>
<feature type="propeptide" id="PRO_0000446683" evidence="11">
    <location>
        <begin position="23"/>
        <end position="28"/>
    </location>
</feature>
<feature type="chain" id="PRO_0000446684" description="Phospholipase A2 SSD1043" evidence="11">
    <location>
        <begin position="29"/>
        <end position="147"/>
    </location>
</feature>
<feature type="active site" evidence="3">
    <location>
        <position position="74"/>
    </location>
</feature>
<feature type="active site" evidence="3">
    <location>
        <position position="124"/>
    </location>
</feature>
<feature type="binding site" evidence="4">
    <location>
        <position position="56"/>
    </location>
    <ligand>
        <name>Ca(2+)</name>
        <dbReference type="ChEBI" id="CHEBI:29108"/>
    </ligand>
</feature>
<feature type="binding site" evidence="4">
    <location>
        <position position="58"/>
    </location>
    <ligand>
        <name>Ca(2+)</name>
        <dbReference type="ChEBI" id="CHEBI:29108"/>
    </ligand>
</feature>
<feature type="binding site" evidence="4">
    <location>
        <position position="75"/>
    </location>
    <ligand>
        <name>Ca(2+)</name>
        <dbReference type="ChEBI" id="CHEBI:29108"/>
    </ligand>
</feature>
<feature type="disulfide bond" evidence="4">
    <location>
        <begin position="55"/>
        <end position="71"/>
    </location>
</feature>
<feature type="disulfide bond" evidence="4">
    <location>
        <begin position="70"/>
        <end position="130"/>
    </location>
</feature>
<feature type="disulfide bond" evidence="4">
    <location>
        <begin position="77"/>
        <end position="123"/>
    </location>
</feature>
<feature type="disulfide bond" evidence="4">
    <location>
        <begin position="86"/>
        <end position="116"/>
    </location>
</feature>
<feature type="disulfide bond" evidence="4">
    <location>
        <begin position="109"/>
        <end position="121"/>
    </location>
</feature>
<dbReference type="EC" id="3.1.1.4" evidence="6"/>
<dbReference type="EMBL" id="KC145030">
    <property type="status" value="NOT_ANNOTATED_CDS"/>
    <property type="molecule type" value="mRNA"/>
</dbReference>
<dbReference type="SMR" id="P0DPT9"/>
<dbReference type="GO" id="GO:0005576">
    <property type="term" value="C:extracellular region"/>
    <property type="evidence" value="ECO:0007669"/>
    <property type="project" value="UniProtKB-SubCell"/>
</dbReference>
<dbReference type="GO" id="GO:0005509">
    <property type="term" value="F:calcium ion binding"/>
    <property type="evidence" value="ECO:0007669"/>
    <property type="project" value="InterPro"/>
</dbReference>
<dbReference type="GO" id="GO:0004623">
    <property type="term" value="F:phospholipase A2 activity"/>
    <property type="evidence" value="ECO:0007669"/>
    <property type="project" value="UniProtKB-EC"/>
</dbReference>
<dbReference type="GO" id="GO:0050482">
    <property type="term" value="P:arachidonate secretion"/>
    <property type="evidence" value="ECO:0007669"/>
    <property type="project" value="InterPro"/>
</dbReference>
<dbReference type="GO" id="GO:0016042">
    <property type="term" value="P:lipid catabolic process"/>
    <property type="evidence" value="ECO:0007669"/>
    <property type="project" value="UniProtKB-KW"/>
</dbReference>
<dbReference type="GO" id="GO:0006644">
    <property type="term" value="P:phospholipid metabolic process"/>
    <property type="evidence" value="ECO:0007669"/>
    <property type="project" value="InterPro"/>
</dbReference>
<dbReference type="CDD" id="cd00125">
    <property type="entry name" value="PLA2c"/>
    <property type="match status" value="1"/>
</dbReference>
<dbReference type="Gene3D" id="1.20.90.10">
    <property type="entry name" value="Phospholipase A2 domain"/>
    <property type="match status" value="1"/>
</dbReference>
<dbReference type="InterPro" id="IPR001211">
    <property type="entry name" value="PLipase_A2"/>
</dbReference>
<dbReference type="InterPro" id="IPR033112">
    <property type="entry name" value="PLipase_A2_Asp_AS"/>
</dbReference>
<dbReference type="InterPro" id="IPR016090">
    <property type="entry name" value="PLipase_A2_dom"/>
</dbReference>
<dbReference type="InterPro" id="IPR036444">
    <property type="entry name" value="PLipase_A2_dom_sf"/>
</dbReference>
<dbReference type="InterPro" id="IPR033113">
    <property type="entry name" value="PLipase_A2_His_AS"/>
</dbReference>
<dbReference type="PANTHER" id="PTHR11716">
    <property type="entry name" value="PHOSPHOLIPASE A2 FAMILY MEMBER"/>
    <property type="match status" value="1"/>
</dbReference>
<dbReference type="PANTHER" id="PTHR11716:SF47">
    <property type="entry name" value="PHOSPHOLIPASE A2-ALPHA"/>
    <property type="match status" value="1"/>
</dbReference>
<dbReference type="Pfam" id="PF00068">
    <property type="entry name" value="Phospholip_A2_1"/>
    <property type="match status" value="1"/>
</dbReference>
<dbReference type="PRINTS" id="PR00389">
    <property type="entry name" value="PHPHLIPASEA2"/>
</dbReference>
<dbReference type="SMART" id="SM00085">
    <property type="entry name" value="PA2c"/>
    <property type="match status" value="1"/>
</dbReference>
<dbReference type="SUPFAM" id="SSF48619">
    <property type="entry name" value="Phospholipase A2, PLA2"/>
    <property type="match status" value="1"/>
</dbReference>
<dbReference type="PROSITE" id="PS00119">
    <property type="entry name" value="PA2_ASP"/>
    <property type="match status" value="1"/>
</dbReference>
<dbReference type="PROSITE" id="PS00118">
    <property type="entry name" value="PA2_HIS"/>
    <property type="match status" value="1"/>
</dbReference>
<comment type="function">
    <text evidence="2">PLA2 catalyzes the calcium-dependent hydrolysis of the 2-acyl groups in 3-sn-phosphoglycerides.</text>
</comment>
<comment type="catalytic activity">
    <reaction evidence="6 7">
        <text>a 1,2-diacyl-sn-glycero-3-phosphocholine + H2O = a 1-acyl-sn-glycero-3-phosphocholine + a fatty acid + H(+)</text>
        <dbReference type="Rhea" id="RHEA:15801"/>
        <dbReference type="ChEBI" id="CHEBI:15377"/>
        <dbReference type="ChEBI" id="CHEBI:15378"/>
        <dbReference type="ChEBI" id="CHEBI:28868"/>
        <dbReference type="ChEBI" id="CHEBI:57643"/>
        <dbReference type="ChEBI" id="CHEBI:58168"/>
        <dbReference type="EC" id="3.1.1.4"/>
    </reaction>
</comment>
<comment type="cofactor">
    <cofactor evidence="4">
        <name>Ca(2+)</name>
        <dbReference type="ChEBI" id="CHEBI:29108"/>
    </cofactor>
    <text evidence="1">Binds 1 Ca(2+) ion.</text>
</comment>
<comment type="subcellular location">
    <subcellularLocation>
        <location evidence="8">Secreted</location>
    </subcellularLocation>
</comment>
<comment type="tissue specificity">
    <text evidence="11">Expressed by the venom gland.</text>
</comment>
<comment type="mass spectrometry" mass="13511.8" method="MALDI" evidence="8"/>
<comment type="similarity">
    <text evidence="10">Belongs to the phospholipase A2 family.</text>
</comment>
<protein>
    <recommendedName>
        <fullName evidence="9">Phospholipase A2 SSD1043</fullName>
        <shortName>PLA2</shortName>
        <ecNumber evidence="6">3.1.1.4</ecNumber>
    </recommendedName>
</protein>
<organism>
    <name type="scientific">Scolopendra dehaani</name>
    <name type="common">Thai centipede</name>
    <name type="synonym">Scolopendra subspinipes dehaani</name>
    <dbReference type="NCBI Taxonomy" id="2609776"/>
    <lineage>
        <taxon>Eukaryota</taxon>
        <taxon>Metazoa</taxon>
        <taxon>Ecdysozoa</taxon>
        <taxon>Arthropoda</taxon>
        <taxon>Myriapoda</taxon>
        <taxon>Chilopoda</taxon>
        <taxon>Pleurostigmophora</taxon>
        <taxon>Scolopendromorpha</taxon>
        <taxon>Scolopendridae</taxon>
        <taxon>Scolopendra</taxon>
    </lineage>
</organism>
<proteinExistence type="evidence at protein level"/>
<name>PA23_SCODE</name>
<reference key="1">
    <citation type="journal article" date="2012" name="J. Proteome Res.">
        <title>Venomic and transcriptomic analysis of centipede Scolopendra subspinipes dehaani.</title>
        <authorList>
            <person name="Liu Z.C."/>
            <person name="Zhang R."/>
            <person name="Zhao F."/>
            <person name="Chen Z.M."/>
            <person name="Liu H.W."/>
            <person name="Wang Y.J."/>
            <person name="Jiang P."/>
            <person name="Zhang Y."/>
            <person name="Wu Y."/>
            <person name="Ding J.P."/>
            <person name="Lee W.H."/>
            <person name="Zhang Y."/>
        </authorList>
    </citation>
    <scope>NUCLEOTIDE SEQUENCE [MRNA]</scope>
    <scope>PROTEIN SEQUENCE OF 29-56</scope>
    <scope>SUBCELLULAR LOCATION</scope>
    <scope>MASS SPECTROMETRY</scope>
    <source>
        <tissue>Venom</tissue>
        <tissue>Venom gland</tissue>
    </source>
</reference>
<keyword id="KW-0106">Calcium</keyword>
<keyword id="KW-0903">Direct protein sequencing</keyword>
<keyword id="KW-1015">Disulfide bond</keyword>
<keyword id="KW-0378">Hydrolase</keyword>
<keyword id="KW-0442">Lipid degradation</keyword>
<keyword id="KW-0443">Lipid metabolism</keyword>
<keyword id="KW-0479">Metal-binding</keyword>
<keyword id="KW-0964">Secreted</keyword>
<keyword id="KW-0732">Signal</keyword>
<sequence length="147" mass="16745">MSPKFMFFSIIAVWSCAAVTEALFIQHRSLANFFFMTLTAAKRSPQEYDGYGNYCGWGGEGTPVDSIDRCCQVHDNCYGTVNENECGHYIRNVKLIDYDWHMEGTEIVCDPKDDACGRALCKCDKDIIDCFNENDKDYNPEYNKVIG</sequence>